<protein>
    <recommendedName>
        <fullName>Probable archaeal histone A1-1</fullName>
    </recommendedName>
</protein>
<organism>
    <name type="scientific">Archaeoglobus fulgidus (strain ATCC 49558 / DSM 4304 / JCM 9628 / NBRC 100126 / VC-16)</name>
    <dbReference type="NCBI Taxonomy" id="224325"/>
    <lineage>
        <taxon>Archaea</taxon>
        <taxon>Methanobacteriati</taxon>
        <taxon>Methanobacteriota</taxon>
        <taxon>Archaeoglobi</taxon>
        <taxon>Archaeoglobales</taxon>
        <taxon>Archaeoglobaceae</taxon>
        <taxon>Archaeoglobus</taxon>
    </lineage>
</organism>
<comment type="function">
    <text evidence="1">Binds and compact DNA (95 to 150 base pairs) to form nucleosome-like structures that contain positive DNA supercoils. Increases the resistance of DNA to thermal denaturation (in vitro).</text>
</comment>
<comment type="subunit">
    <text evidence="1">Homodimer or heterodimer with another histone. Dimers then assemble into higher oligomers, with the DNA wrapped around the protein core (By similarity).</text>
</comment>
<comment type="subcellular location">
    <subcellularLocation>
        <location evidence="2">Cytoplasm</location>
    </subcellularLocation>
    <subcellularLocation>
        <location evidence="2">Chromosome</location>
    </subcellularLocation>
</comment>
<comment type="similarity">
    <text evidence="2">Belongs to the archaeal histone HMF family.</text>
</comment>
<feature type="chain" id="PRO_0000154980" description="Probable archaeal histone A1-1">
    <location>
        <begin position="1"/>
        <end position="72"/>
    </location>
</feature>
<feature type="region of interest" description="Interaction with DNA" evidence="1">
    <location>
        <begin position="24"/>
        <end position="26"/>
    </location>
</feature>
<feature type="region of interest" description="Interaction with DNA" evidence="1">
    <location>
        <begin position="58"/>
        <end position="61"/>
    </location>
</feature>
<sequence length="72" mass="7965">MEVLRVELPLAPVERLLRKAGASRVSEDAKVELAKAIEEYAMQIGKKAAELAKHAGRKTVKVDDIKLALREL</sequence>
<name>HAF1_ARCFU</name>
<accession>O29910</accession>
<evidence type="ECO:0000250" key="1">
    <source>
        <dbReference type="UniProtKB" id="P19267"/>
    </source>
</evidence>
<evidence type="ECO:0000305" key="2"/>
<proteinExistence type="inferred from homology"/>
<reference key="1">
    <citation type="journal article" date="1997" name="Nature">
        <title>The complete genome sequence of the hyperthermophilic, sulphate-reducing archaeon Archaeoglobus fulgidus.</title>
        <authorList>
            <person name="Klenk H.-P."/>
            <person name="Clayton R.A."/>
            <person name="Tomb J.-F."/>
            <person name="White O."/>
            <person name="Nelson K.E."/>
            <person name="Ketchum K.A."/>
            <person name="Dodson R.J."/>
            <person name="Gwinn M.L."/>
            <person name="Hickey E.K."/>
            <person name="Peterson J.D."/>
            <person name="Richardson D.L."/>
            <person name="Kerlavage A.R."/>
            <person name="Graham D.E."/>
            <person name="Kyrpides N.C."/>
            <person name="Fleischmann R.D."/>
            <person name="Quackenbush J."/>
            <person name="Lee N.H."/>
            <person name="Sutton G.G."/>
            <person name="Gill S.R."/>
            <person name="Kirkness E.F."/>
            <person name="Dougherty B.A."/>
            <person name="McKenney K."/>
            <person name="Adams M.D."/>
            <person name="Loftus B.J."/>
            <person name="Peterson S.N."/>
            <person name="Reich C.I."/>
            <person name="McNeil L.K."/>
            <person name="Badger J.H."/>
            <person name="Glodek A."/>
            <person name="Zhou L."/>
            <person name="Overbeek R."/>
            <person name="Gocayne J.D."/>
            <person name="Weidman J.F."/>
            <person name="McDonald L.A."/>
            <person name="Utterback T.R."/>
            <person name="Cotton M.D."/>
            <person name="Spriggs T."/>
            <person name="Artiach P."/>
            <person name="Kaine B.P."/>
            <person name="Sykes S.M."/>
            <person name="Sadow P.W."/>
            <person name="D'Andrea K.P."/>
            <person name="Bowman C."/>
            <person name="Fujii C."/>
            <person name="Garland S.A."/>
            <person name="Mason T.M."/>
            <person name="Olsen G.J."/>
            <person name="Fraser C.M."/>
            <person name="Smith H.O."/>
            <person name="Woese C.R."/>
            <person name="Venter J.C."/>
        </authorList>
    </citation>
    <scope>NUCLEOTIDE SEQUENCE [LARGE SCALE GENOMIC DNA]</scope>
    <source>
        <strain>ATCC 49558 / DSM 4304 / JCM 9628 / NBRC 100126 / VC-16</strain>
    </source>
</reference>
<keyword id="KW-0158">Chromosome</keyword>
<keyword id="KW-0963">Cytoplasm</keyword>
<keyword id="KW-0238">DNA-binding</keyword>
<keyword id="KW-1185">Reference proteome</keyword>
<gene>
    <name type="primary">hpyA1-1</name>
    <name type="ordered locus">AF_0337</name>
</gene>
<dbReference type="EMBL" id="AE000782">
    <property type="protein sequence ID" value="AAB90902.1"/>
    <property type="molecule type" value="Genomic_DNA"/>
</dbReference>
<dbReference type="PIR" id="A69292">
    <property type="entry name" value="A69292"/>
</dbReference>
<dbReference type="RefSeq" id="WP_010877844.1">
    <property type="nucleotide sequence ID" value="NC_000917.1"/>
</dbReference>
<dbReference type="SMR" id="O29910"/>
<dbReference type="STRING" id="224325.AF_0337"/>
<dbReference type="PaxDb" id="224325-AF_0337"/>
<dbReference type="EnsemblBacteria" id="AAB90902">
    <property type="protein sequence ID" value="AAB90902"/>
    <property type="gene ID" value="AF_0337"/>
</dbReference>
<dbReference type="KEGG" id="afu:AF_0337"/>
<dbReference type="eggNOG" id="arCOG02144">
    <property type="taxonomic scope" value="Archaea"/>
</dbReference>
<dbReference type="HOGENOM" id="CLU_192667_0_0_2"/>
<dbReference type="OrthoDB" id="7514at2157"/>
<dbReference type="PhylomeDB" id="O29910"/>
<dbReference type="Proteomes" id="UP000002199">
    <property type="component" value="Chromosome"/>
</dbReference>
<dbReference type="GO" id="GO:0005694">
    <property type="term" value="C:chromosome"/>
    <property type="evidence" value="ECO:0007669"/>
    <property type="project" value="UniProtKB-SubCell"/>
</dbReference>
<dbReference type="GO" id="GO:0005737">
    <property type="term" value="C:cytoplasm"/>
    <property type="evidence" value="ECO:0007669"/>
    <property type="project" value="UniProtKB-SubCell"/>
</dbReference>
<dbReference type="GO" id="GO:0003677">
    <property type="term" value="F:DNA binding"/>
    <property type="evidence" value="ECO:0007669"/>
    <property type="project" value="UniProtKB-KW"/>
</dbReference>
<dbReference type="GO" id="GO:0046982">
    <property type="term" value="F:protein heterodimerization activity"/>
    <property type="evidence" value="ECO:0007669"/>
    <property type="project" value="InterPro"/>
</dbReference>
<dbReference type="CDD" id="cd22909">
    <property type="entry name" value="HFD_archaea_histone-like"/>
    <property type="match status" value="1"/>
</dbReference>
<dbReference type="Gene3D" id="1.10.20.10">
    <property type="entry name" value="Histone, subunit A"/>
    <property type="match status" value="1"/>
</dbReference>
<dbReference type="InterPro" id="IPR050947">
    <property type="entry name" value="Archaeal_histone_HMF"/>
</dbReference>
<dbReference type="InterPro" id="IPR003958">
    <property type="entry name" value="CBFA_NFYB_domain"/>
</dbReference>
<dbReference type="InterPro" id="IPR009072">
    <property type="entry name" value="Histone-fold"/>
</dbReference>
<dbReference type="InterPro" id="IPR050004">
    <property type="entry name" value="HmfB-like"/>
</dbReference>
<dbReference type="NCBIfam" id="NF043032">
    <property type="entry name" value="archaea_histone"/>
    <property type="match status" value="1"/>
</dbReference>
<dbReference type="PANTHER" id="PTHR47828">
    <property type="entry name" value="ARCHAEAL HISTONE A"/>
    <property type="match status" value="1"/>
</dbReference>
<dbReference type="PANTHER" id="PTHR47828:SF1">
    <property type="entry name" value="ARCHAEAL HISTONE A"/>
    <property type="match status" value="1"/>
</dbReference>
<dbReference type="Pfam" id="PF00808">
    <property type="entry name" value="CBFD_NFYB_HMF"/>
    <property type="match status" value="1"/>
</dbReference>
<dbReference type="SUPFAM" id="SSF47113">
    <property type="entry name" value="Histone-fold"/>
    <property type="match status" value="1"/>
</dbReference>